<keyword id="KW-0025">Alternative splicing</keyword>
<keyword id="KW-0037">Angiogenesis</keyword>
<keyword id="KW-0068">Autocatalytic cleavage</keyword>
<keyword id="KW-0106">Calcium</keyword>
<keyword id="KW-0177">Collagen degradation</keyword>
<keyword id="KW-0963">Cytoplasm</keyword>
<keyword id="KW-1015">Disulfide bond</keyword>
<keyword id="KW-0272">Extracellular matrix</keyword>
<keyword id="KW-0325">Glycoprotein</keyword>
<keyword id="KW-0378">Hydrolase</keyword>
<keyword id="KW-0472">Membrane</keyword>
<keyword id="KW-0479">Metal-binding</keyword>
<keyword id="KW-0482">Metalloprotease</keyword>
<keyword id="KW-0496">Mitochondrion</keyword>
<keyword id="KW-0539">Nucleus</keyword>
<keyword id="KW-0597">Phosphoprotein</keyword>
<keyword id="KW-0645">Protease</keyword>
<keyword id="KW-1185">Reference proteome</keyword>
<keyword id="KW-0677">Repeat</keyword>
<keyword id="KW-0964">Secreted</keyword>
<keyword id="KW-0732">Signal</keyword>
<keyword id="KW-0862">Zinc</keyword>
<keyword id="KW-0865">Zymogen</keyword>
<sequence>MEARVAWGALAGPLRVLCVLCCLLGRAIAAPSPIIKFPGDVAPKTDKELAVQYLNTFYGCPKESCNLFVLKDTLKKMQKFFGLPQTGDLDQNTIETMRKPRCGNPDVANYNFFPRKPKWDKNQITYRIIGYTPDLDPETVDDAFARALKVWSDVTPLRFSRIHDGEADIMINFGRWEHGDGYPFDGKDGLLAHAFAPGTGVGGDSHFDDDELWTLGEGQVVRVKYGNADGEYCKFPFLFNGREYSSCTDTGRSDGFLWCSTTYNFEKDGKYGFCPHEALFTMGGNADGQPCKFPFRFQGTSYNSCTTEGRTDGYRWCGTTEDYDRDKKYGFCPETAMSTVGGNSEGAPCVFPFTFLGNKYESCTSAGRNDGKVWCATTTNYDDDRKWGFCPDQGYSLFLVAAHEFGHAMGLEHSQDPGALMAPIYTYTKNFRLSHDDIKGIQELYGPSPDADTDTGTGPTPTLGPVTPEICKQDIVFDGIAQIRGEIFFFKDRFIWRTVTPRDKPTGPLLVATFWPELPEKIDAVYEAPQEEKAVFFAGNEYWVYSASTLERGYPKPLTSLGLPPDVQQVDAAFNWSKNKKTYIFAGDKFWRYNEVKKKMDPGFPKLIADSWNAIPDNLDAVVDLQGGGHSYFFKGAYYLKLENQSLKSVKFGSIKSDWLGC</sequence>
<comment type="function">
    <text evidence="1">Ubiquitinous metalloproteinase that is involved in diverse functions such as remodeling of the vasculature, angiogenesis, tissue repair, tumor invasion, inflammation, and atherosclerotic plaque rupture. As well as degrading extracellular matrix proteins, can also act on several nonmatrix proteins such as big endothelial 1 and beta-type CGRP promoting vasoconstriction. Also cleaves KISS at a Gly-|-Leu bond. Appears to have a role in myocardial cell death pathways. Contributes to myocardial oxidative stress by regulating the activity of GSK3beta. Cleaves GSK3beta in vitro. Involved in the formation of the fibrovascular tissues (By similarity).</text>
</comment>
<comment type="function">
    <text evidence="1">PEX, the C-terminal non-catalytic fragment of MMP2, possesses anti-angiogenic and anti-tumor properties and inhibits cell migration and cell adhesion to FGF2 and vitronectin. Ligand for integrin alpha-v/beta-3 on the surface of blood vessels (By similarity).</text>
</comment>
<comment type="function">
    <molecule>Isoform 2</molecule>
    <text evidence="8">Mediates the proteolysis of CHUK/IKKA and initiates a primary innate immune response by inducing mitochondrial-nuclear stress signaling with activation of the pro-inflammatory NF-kappaB, NFAT and IRF transcriptional pathways.</text>
</comment>
<comment type="catalytic activity">
    <reaction evidence="2">
        <text>Cleavage of gelatin type I and collagen types IV, V, VII, X. Cleaves the collagen-like sequence Pro-Gln-Gly-|-Ile-Ala-Gly-Gln.</text>
        <dbReference type="EC" id="3.4.24.24"/>
    </reaction>
</comment>
<comment type="cofactor">
    <cofactor evidence="2">
        <name>Ca(2+)</name>
        <dbReference type="ChEBI" id="CHEBI:29108"/>
    </cofactor>
    <text evidence="2">Binds 4 Ca(2+) ions per subunit.</text>
</comment>
<comment type="cofactor">
    <cofactor evidence="2">
        <name>Zn(2+)</name>
        <dbReference type="ChEBI" id="CHEBI:29105"/>
    </cofactor>
    <text evidence="2">Binds 2 Zn(2+) ions per subunit.</text>
</comment>
<comment type="subunit">
    <text evidence="1">Interacts (via the C-terminal hemopexin-like domains-containing region) with the integrin alpha-V/beta-3; the interaction promotes vascular invasion in angiogenic vessels and melamoma cells. Interacts (via the C-terminal PEX domain) with TIMP2 (via the C-terminal); the interaction inhibits the degradation activity. Interacts with GSK3B (By similarity).</text>
</comment>
<comment type="subcellular location">
    <molecule>Isoform 1</molecule>
    <subcellularLocation>
        <location evidence="1">Secreted</location>
        <location evidence="1">Extracellular space</location>
        <location evidence="1">Extracellular matrix</location>
    </subcellularLocation>
    <subcellularLocation>
        <location evidence="1">Membrane</location>
    </subcellularLocation>
    <subcellularLocation>
        <location evidence="1">Nucleus</location>
    </subcellularLocation>
    <text evidence="1">Colocalizes with integrin alphaV/beta3 at the membrane surface in angiogenic blood vessels and melanomas. Found in mitochondria, along microfibrils, and in nuclei of cardiomyocytes (By similarity).</text>
</comment>
<comment type="subcellular location">
    <molecule>Isoform 2</molecule>
    <subcellularLocation>
        <location>Cytoplasm</location>
    </subcellularLocation>
    <subcellularLocation>
        <location>Mitochondrion</location>
    </subcellularLocation>
</comment>
<comment type="alternative products">
    <event type="alternative splicing"/>
    <isoform>
        <id>P33434-1</id>
        <name>1</name>
        <sequence type="displayed"/>
    </isoform>
    <isoform>
        <id>P33434-2</id>
        <name>2</name>
        <sequence type="described" ref="VSP_044632"/>
    </isoform>
</comment>
<comment type="developmental stage">
    <text evidence="9">Present in unfertilized eggs and at the zygote and cleavage stages. Levels increase at the blastocyst stage and with endoderm differentiation.</text>
</comment>
<comment type="domain">
    <text>The conserved cysteine present in the cysteine-switch motif binds the catalytic zinc ion, thus inhibiting the enzyme. The dissociation of the cysteine from the zinc ion upon the activation-peptide release activates the enzyme.</text>
</comment>
<comment type="PTM">
    <text evidence="1">Phosphorylation on multiple sites modulates enzymatic activity. Phosphorylated by PKC in vitro (By similarity).</text>
</comment>
<comment type="PTM">
    <text evidence="1">The propeptide is processed by MMP14 (MT-MMP1) and MMP16 (MT-MMP3) (By similarity). Autocatalytic cleavage in the C-terminal produces the anti-angiogenic peptide, PEX. This processing appears to be facilitated by binding integrinv/beta3 (By similarity).</text>
</comment>
<comment type="miscellaneous">
    <molecule>Isoform 2</molecule>
    <text evidence="10">Induced by oxidative stress.</text>
</comment>
<comment type="similarity">
    <text evidence="10">Belongs to the peptidase M10A family.</text>
</comment>
<accession>P33434</accession>
<proteinExistence type="evidence at protein level"/>
<feature type="signal peptide" evidence="3">
    <location>
        <begin position="1"/>
        <end position="29"/>
    </location>
</feature>
<feature type="propeptide" id="PRO_0000028716" description="Activation peptide">
    <location>
        <begin position="30"/>
        <end position="109"/>
    </location>
</feature>
<feature type="chain" id="PRO_0000028717" description="72 kDa type IV collagenase">
    <location>
        <begin position="110"/>
        <end position="662"/>
    </location>
</feature>
<feature type="chain" id="PRO_0000391627" description="PEX" evidence="1">
    <location>
        <begin position="445"/>
        <end position="662"/>
    </location>
</feature>
<feature type="domain" description="Fibronectin type-II 1" evidence="5">
    <location>
        <begin position="228"/>
        <end position="276"/>
    </location>
</feature>
<feature type="domain" description="Fibronectin type-II 2" evidence="5">
    <location>
        <begin position="286"/>
        <end position="334"/>
    </location>
</feature>
<feature type="domain" description="Fibronectin type-II 3" evidence="5">
    <location>
        <begin position="344"/>
        <end position="392"/>
    </location>
</feature>
<feature type="repeat" description="Hemopexin 1">
    <location>
        <begin position="474"/>
        <end position="518"/>
    </location>
</feature>
<feature type="repeat" description="Hemopexin 2">
    <location>
        <begin position="519"/>
        <end position="565"/>
    </location>
</feature>
<feature type="repeat" description="Hemopexin 3">
    <location>
        <begin position="567"/>
        <end position="615"/>
    </location>
</feature>
<feature type="repeat" description="Hemopexin 4">
    <location>
        <begin position="616"/>
        <end position="662"/>
    </location>
</feature>
<feature type="region of interest" description="Collagenase-like 1">
    <location>
        <begin position="110"/>
        <end position="221"/>
    </location>
</feature>
<feature type="region of interest" description="Collagen-binding">
    <location>
        <begin position="222"/>
        <end position="396"/>
    </location>
</feature>
<feature type="region of interest" description="Collagenase-like 2">
    <location>
        <begin position="397"/>
        <end position="467"/>
    </location>
</feature>
<feature type="region of interest" description="Required for inhibitor TIMP2 binding" evidence="1">
    <location>
        <begin position="414"/>
        <end position="662"/>
    </location>
</feature>
<feature type="region of interest" description="Disordered" evidence="7">
    <location>
        <begin position="446"/>
        <end position="465"/>
    </location>
</feature>
<feature type="short sequence motif" description="Cysteine switch" evidence="1">
    <location>
        <begin position="100"/>
        <end position="107"/>
    </location>
</feature>
<feature type="active site" evidence="6">
    <location>
        <position position="404"/>
    </location>
</feature>
<feature type="binding site" description="in inhibited form" evidence="2">
    <location>
        <position position="102"/>
    </location>
    <ligand>
        <name>Zn(2+)</name>
        <dbReference type="ChEBI" id="CHEBI:29105"/>
        <label>1</label>
        <note>catalytic</note>
    </ligand>
</feature>
<feature type="binding site" evidence="2">
    <location>
        <position position="134"/>
    </location>
    <ligand>
        <name>Ca(2+)</name>
        <dbReference type="ChEBI" id="CHEBI:29108"/>
        <label>1</label>
    </ligand>
</feature>
<feature type="binding site" evidence="2">
    <location>
        <position position="168"/>
    </location>
    <ligand>
        <name>Ca(2+)</name>
        <dbReference type="ChEBI" id="CHEBI:29108"/>
        <label>2</label>
    </ligand>
</feature>
<feature type="binding site" evidence="2">
    <location>
        <position position="178"/>
    </location>
    <ligand>
        <name>Zn(2+)</name>
        <dbReference type="ChEBI" id="CHEBI:29105"/>
        <label>2</label>
    </ligand>
</feature>
<feature type="binding site" evidence="2">
    <location>
        <position position="180"/>
    </location>
    <ligand>
        <name>Zn(2+)</name>
        <dbReference type="ChEBI" id="CHEBI:29105"/>
        <label>2</label>
    </ligand>
</feature>
<feature type="binding site" evidence="2">
    <location>
        <position position="185"/>
    </location>
    <ligand>
        <name>Ca(2+)</name>
        <dbReference type="ChEBI" id="CHEBI:29108"/>
        <label>3</label>
    </ligand>
</feature>
<feature type="binding site" evidence="2">
    <location>
        <position position="186"/>
    </location>
    <ligand>
        <name>Ca(2+)</name>
        <dbReference type="ChEBI" id="CHEBI:29108"/>
        <label>3</label>
    </ligand>
</feature>
<feature type="binding site" evidence="2">
    <location>
        <position position="193"/>
    </location>
    <ligand>
        <name>Zn(2+)</name>
        <dbReference type="ChEBI" id="CHEBI:29105"/>
        <label>2</label>
    </ligand>
</feature>
<feature type="binding site" evidence="2">
    <location>
        <position position="200"/>
    </location>
    <ligand>
        <name>Ca(2+)</name>
        <dbReference type="ChEBI" id="CHEBI:29108"/>
        <label>2</label>
    </ligand>
</feature>
<feature type="binding site" evidence="2">
    <location>
        <position position="202"/>
    </location>
    <ligand>
        <name>Ca(2+)</name>
        <dbReference type="ChEBI" id="CHEBI:29108"/>
        <label>2</label>
    </ligand>
</feature>
<feature type="binding site" evidence="2">
    <location>
        <position position="204"/>
    </location>
    <ligand>
        <name>Ca(2+)</name>
        <dbReference type="ChEBI" id="CHEBI:29108"/>
        <label>2</label>
    </ligand>
</feature>
<feature type="binding site" evidence="2">
    <location>
        <position position="206"/>
    </location>
    <ligand>
        <name>Zn(2+)</name>
        <dbReference type="ChEBI" id="CHEBI:29105"/>
        <label>2</label>
    </ligand>
</feature>
<feature type="binding site" evidence="2">
    <location>
        <position position="208"/>
    </location>
    <ligand>
        <name>Ca(2+)</name>
        <dbReference type="ChEBI" id="CHEBI:29108"/>
        <label>3</label>
    </ligand>
</feature>
<feature type="binding site" evidence="2">
    <location>
        <position position="209"/>
    </location>
    <ligand>
        <name>Ca(2+)</name>
        <dbReference type="ChEBI" id="CHEBI:29108"/>
        <label>1</label>
    </ligand>
</feature>
<feature type="binding site" evidence="2">
    <location>
        <position position="211"/>
    </location>
    <ligand>
        <name>Ca(2+)</name>
        <dbReference type="ChEBI" id="CHEBI:29108"/>
        <label>1</label>
    </ligand>
</feature>
<feature type="binding site" evidence="2">
    <location>
        <position position="211"/>
    </location>
    <ligand>
        <name>Ca(2+)</name>
        <dbReference type="ChEBI" id="CHEBI:29108"/>
        <label>3</label>
    </ligand>
</feature>
<feature type="binding site" evidence="2">
    <location>
        <position position="403"/>
    </location>
    <ligand>
        <name>Zn(2+)</name>
        <dbReference type="ChEBI" id="CHEBI:29105"/>
        <label>1</label>
        <note>catalytic</note>
    </ligand>
</feature>
<feature type="binding site" evidence="2">
    <location>
        <position position="407"/>
    </location>
    <ligand>
        <name>Zn(2+)</name>
        <dbReference type="ChEBI" id="CHEBI:29105"/>
        <label>1</label>
        <note>catalytic</note>
    </ligand>
</feature>
<feature type="binding site" evidence="2">
    <location>
        <position position="413"/>
    </location>
    <ligand>
        <name>Zn(2+)</name>
        <dbReference type="ChEBI" id="CHEBI:29105"/>
        <label>1</label>
        <note>catalytic</note>
    </ligand>
</feature>
<feature type="binding site" evidence="2">
    <location>
        <position position="478"/>
    </location>
    <ligand>
        <name>Ca(2+)</name>
        <dbReference type="ChEBI" id="CHEBI:29108"/>
        <label>4</label>
    </ligand>
</feature>
<feature type="binding site" evidence="2">
    <location>
        <position position="523"/>
    </location>
    <ligand>
        <name>Ca(2+)</name>
        <dbReference type="ChEBI" id="CHEBI:29108"/>
        <label>4</label>
    </ligand>
</feature>
<feature type="binding site" evidence="2">
    <location>
        <position position="571"/>
    </location>
    <ligand>
        <name>Ca(2+)</name>
        <dbReference type="ChEBI" id="CHEBI:29108"/>
        <label>4</label>
    </ligand>
</feature>
<feature type="binding site" evidence="2">
    <location>
        <position position="620"/>
    </location>
    <ligand>
        <name>Ca(2+)</name>
        <dbReference type="ChEBI" id="CHEBI:29108"/>
        <label>4</label>
    </ligand>
</feature>
<feature type="glycosylation site" description="N-linked (GlcNAc...) asparagine" evidence="4">
    <location>
        <position position="575"/>
    </location>
</feature>
<feature type="glycosylation site" description="N-linked (GlcNAc...) asparagine" evidence="4">
    <location>
        <position position="644"/>
    </location>
</feature>
<feature type="disulfide bond" evidence="5">
    <location>
        <begin position="233"/>
        <end position="259"/>
    </location>
</feature>
<feature type="disulfide bond" evidence="5">
    <location>
        <begin position="247"/>
        <end position="274"/>
    </location>
</feature>
<feature type="disulfide bond" evidence="5">
    <location>
        <begin position="291"/>
        <end position="317"/>
    </location>
</feature>
<feature type="disulfide bond" evidence="5">
    <location>
        <begin position="305"/>
        <end position="332"/>
    </location>
</feature>
<feature type="disulfide bond" evidence="5">
    <location>
        <begin position="349"/>
        <end position="375"/>
    </location>
</feature>
<feature type="disulfide bond" evidence="5">
    <location>
        <begin position="363"/>
        <end position="390"/>
    </location>
</feature>
<feature type="disulfide bond" evidence="5">
    <location>
        <begin position="471"/>
        <end position="662"/>
    </location>
</feature>
<feature type="splice variant" id="VSP_044632" description="In isoform 2." evidence="10">
    <location>
        <begin position="1"/>
        <end position="76"/>
    </location>
</feature>
<protein>
    <recommendedName>
        <fullName>72 kDa type IV collagenase</fullName>
        <ecNumber evidence="2">3.4.24.24</ecNumber>
    </recommendedName>
    <alternativeName>
        <fullName>72 kDa gelatinase</fullName>
    </alternativeName>
    <alternativeName>
        <fullName>Gelatinase A</fullName>
    </alternativeName>
    <alternativeName>
        <fullName>Matrix metalloproteinase-2</fullName>
        <shortName>MMP-2</shortName>
    </alternativeName>
    <component>
        <recommendedName>
            <fullName>PEX</fullName>
        </recommendedName>
    </component>
</protein>
<gene>
    <name type="primary">Mmp2</name>
</gene>
<name>MMP2_MOUSE</name>
<dbReference type="EC" id="3.4.24.24" evidence="2"/>
<dbReference type="EMBL" id="M84324">
    <property type="protein sequence ID" value="AAA39338.1"/>
    <property type="molecule type" value="mRNA"/>
</dbReference>
<dbReference type="EMBL" id="BC070430">
    <property type="protein sequence ID" value="AAH70430.1"/>
    <property type="molecule type" value="mRNA"/>
</dbReference>
<dbReference type="CCDS" id="CCDS22523.1">
    <molecule id="P33434-1"/>
</dbReference>
<dbReference type="PIR" id="A42496">
    <property type="entry name" value="A42496"/>
</dbReference>
<dbReference type="RefSeq" id="NP_032636.1">
    <molecule id="P33434-1"/>
    <property type="nucleotide sequence ID" value="NM_008610.3"/>
</dbReference>
<dbReference type="SMR" id="P33434"/>
<dbReference type="BioGRID" id="201449">
    <property type="interactions" value="16"/>
</dbReference>
<dbReference type="FunCoup" id="P33434">
    <property type="interactions" value="412"/>
</dbReference>
<dbReference type="IntAct" id="P33434">
    <property type="interactions" value="1"/>
</dbReference>
<dbReference type="STRING" id="10090.ENSMUSP00000034187"/>
<dbReference type="BindingDB" id="P33434"/>
<dbReference type="ChEMBL" id="CHEMBL3095"/>
<dbReference type="MEROPS" id="M10.003"/>
<dbReference type="GlyCosmos" id="P33434">
    <property type="glycosylation" value="2 sites, No reported glycans"/>
</dbReference>
<dbReference type="GlyGen" id="P33434">
    <property type="glycosylation" value="4 sites"/>
</dbReference>
<dbReference type="PhosphoSitePlus" id="P33434"/>
<dbReference type="CPTAC" id="non-CPTAC-3729"/>
<dbReference type="jPOST" id="P33434"/>
<dbReference type="PaxDb" id="10090-ENSMUSP00000034187"/>
<dbReference type="PeptideAtlas" id="P33434"/>
<dbReference type="ProteomicsDB" id="295691">
    <molecule id="P33434-1"/>
</dbReference>
<dbReference type="ProteomicsDB" id="295692">
    <molecule id="P33434-2"/>
</dbReference>
<dbReference type="Pumba" id="P33434"/>
<dbReference type="ABCD" id="P33434">
    <property type="antibodies" value="1 sequenced antibody"/>
</dbReference>
<dbReference type="Antibodypedia" id="773">
    <property type="antibodies" value="1654 antibodies from 53 providers"/>
</dbReference>
<dbReference type="DNASU" id="17390"/>
<dbReference type="Ensembl" id="ENSMUST00000034187.9">
    <molecule id="P33434-1"/>
    <property type="protein sequence ID" value="ENSMUSP00000034187.8"/>
    <property type="gene ID" value="ENSMUSG00000031740.9"/>
</dbReference>
<dbReference type="GeneID" id="17390"/>
<dbReference type="KEGG" id="mmu:17390"/>
<dbReference type="UCSC" id="uc009mue.1">
    <molecule id="P33434-1"/>
    <property type="organism name" value="mouse"/>
</dbReference>
<dbReference type="AGR" id="MGI:97009"/>
<dbReference type="CTD" id="4313"/>
<dbReference type="MGI" id="MGI:97009">
    <property type="gene designation" value="Mmp2"/>
</dbReference>
<dbReference type="VEuPathDB" id="HostDB:ENSMUSG00000031740"/>
<dbReference type="eggNOG" id="KOG1565">
    <property type="taxonomic scope" value="Eukaryota"/>
</dbReference>
<dbReference type="GeneTree" id="ENSGT00940000158511"/>
<dbReference type="HOGENOM" id="CLU_015489_6_2_1"/>
<dbReference type="InParanoid" id="P33434"/>
<dbReference type="OMA" id="CPKDSCN"/>
<dbReference type="OrthoDB" id="406838at2759"/>
<dbReference type="PhylomeDB" id="P33434"/>
<dbReference type="TreeFam" id="TF315428"/>
<dbReference type="BRENDA" id="3.4.24.24">
    <property type="organism ID" value="3474"/>
</dbReference>
<dbReference type="Reactome" id="R-MMU-1442490">
    <property type="pathway name" value="Collagen degradation"/>
</dbReference>
<dbReference type="Reactome" id="R-MMU-1474228">
    <property type="pathway name" value="Degradation of the extracellular matrix"/>
</dbReference>
<dbReference type="Reactome" id="R-MMU-1592389">
    <property type="pathway name" value="Activation of Matrix Metalloproteinases"/>
</dbReference>
<dbReference type="Reactome" id="R-MMU-3928665">
    <property type="pathway name" value="EPH-ephrin mediated repulsion of cells"/>
</dbReference>
<dbReference type="Reactome" id="R-MMU-9009391">
    <property type="pathway name" value="Extra-nuclear estrogen signaling"/>
</dbReference>
<dbReference type="BioGRID-ORCS" id="17390">
    <property type="hits" value="4 hits in 76 CRISPR screens"/>
</dbReference>
<dbReference type="ChiTaRS" id="Mmp2">
    <property type="organism name" value="mouse"/>
</dbReference>
<dbReference type="PRO" id="PR:P33434"/>
<dbReference type="Proteomes" id="UP000000589">
    <property type="component" value="Chromosome 8"/>
</dbReference>
<dbReference type="RNAct" id="P33434">
    <property type="molecule type" value="protein"/>
</dbReference>
<dbReference type="Bgee" id="ENSMUSG00000031740">
    <property type="expression patterns" value="Expressed in epithelium of cochlear duct and 245 other cell types or tissues"/>
</dbReference>
<dbReference type="ExpressionAtlas" id="P33434">
    <property type="expression patterns" value="baseline and differential"/>
</dbReference>
<dbReference type="GO" id="GO:0005737">
    <property type="term" value="C:cytoplasm"/>
    <property type="evidence" value="ECO:0000314"/>
    <property type="project" value="MGI"/>
</dbReference>
<dbReference type="GO" id="GO:0031012">
    <property type="term" value="C:extracellular matrix"/>
    <property type="evidence" value="ECO:0007669"/>
    <property type="project" value="InterPro"/>
</dbReference>
<dbReference type="GO" id="GO:0005615">
    <property type="term" value="C:extracellular space"/>
    <property type="evidence" value="ECO:0007005"/>
    <property type="project" value="BHF-UCL"/>
</dbReference>
<dbReference type="GO" id="GO:0005739">
    <property type="term" value="C:mitochondrion"/>
    <property type="evidence" value="ECO:0000314"/>
    <property type="project" value="MGI"/>
</dbReference>
<dbReference type="GO" id="GO:0005634">
    <property type="term" value="C:nucleus"/>
    <property type="evidence" value="ECO:0007669"/>
    <property type="project" value="UniProtKB-SubCell"/>
</dbReference>
<dbReference type="GO" id="GO:0005886">
    <property type="term" value="C:plasma membrane"/>
    <property type="evidence" value="ECO:0000314"/>
    <property type="project" value="MGI"/>
</dbReference>
<dbReference type="GO" id="GO:0030017">
    <property type="term" value="C:sarcomere"/>
    <property type="evidence" value="ECO:0000314"/>
    <property type="project" value="MGI"/>
</dbReference>
<dbReference type="GO" id="GO:0001968">
    <property type="term" value="F:fibronectin binding"/>
    <property type="evidence" value="ECO:0007669"/>
    <property type="project" value="Ensembl"/>
</dbReference>
<dbReference type="GO" id="GO:0004222">
    <property type="term" value="F:metalloendopeptidase activity"/>
    <property type="evidence" value="ECO:0000314"/>
    <property type="project" value="MGI"/>
</dbReference>
<dbReference type="GO" id="GO:0008270">
    <property type="term" value="F:zinc ion binding"/>
    <property type="evidence" value="ECO:0007669"/>
    <property type="project" value="InterPro"/>
</dbReference>
<dbReference type="GO" id="GO:0001525">
    <property type="term" value="P:angiogenesis"/>
    <property type="evidence" value="ECO:0007669"/>
    <property type="project" value="UniProtKB-KW"/>
</dbReference>
<dbReference type="GO" id="GO:0001955">
    <property type="term" value="P:blood vessel maturation"/>
    <property type="evidence" value="ECO:0000316"/>
    <property type="project" value="MGI"/>
</dbReference>
<dbReference type="GO" id="GO:0060346">
    <property type="term" value="P:bone trabecula formation"/>
    <property type="evidence" value="ECO:0000316"/>
    <property type="project" value="MGI"/>
</dbReference>
<dbReference type="GO" id="GO:0071230">
    <property type="term" value="P:cellular response to amino acid stimulus"/>
    <property type="evidence" value="ECO:0000314"/>
    <property type="project" value="MGI"/>
</dbReference>
<dbReference type="GO" id="GO:0071392">
    <property type="term" value="P:cellular response to estradiol stimulus"/>
    <property type="evidence" value="ECO:0007669"/>
    <property type="project" value="Ensembl"/>
</dbReference>
<dbReference type="GO" id="GO:0071498">
    <property type="term" value="P:cellular response to fluid shear stress"/>
    <property type="evidence" value="ECO:0007669"/>
    <property type="project" value="Ensembl"/>
</dbReference>
<dbReference type="GO" id="GO:0071347">
    <property type="term" value="P:cellular response to interleukin-1"/>
    <property type="evidence" value="ECO:0007669"/>
    <property type="project" value="Ensembl"/>
</dbReference>
<dbReference type="GO" id="GO:0034614">
    <property type="term" value="P:cellular response to reactive oxygen species"/>
    <property type="evidence" value="ECO:0000315"/>
    <property type="project" value="MGI"/>
</dbReference>
<dbReference type="GO" id="GO:0071492">
    <property type="term" value="P:cellular response to UV-A"/>
    <property type="evidence" value="ECO:0000250"/>
    <property type="project" value="UniProtKB"/>
</dbReference>
<dbReference type="GO" id="GO:0030574">
    <property type="term" value="P:collagen catabolic process"/>
    <property type="evidence" value="ECO:0000315"/>
    <property type="project" value="MGI"/>
</dbReference>
<dbReference type="GO" id="GO:0007566">
    <property type="term" value="P:embryo implantation"/>
    <property type="evidence" value="ECO:0000314"/>
    <property type="project" value="MGI"/>
</dbReference>
<dbReference type="GO" id="GO:0035987">
    <property type="term" value="P:endodermal cell differentiation"/>
    <property type="evidence" value="ECO:0007669"/>
    <property type="project" value="Ensembl"/>
</dbReference>
<dbReference type="GO" id="GO:0060325">
    <property type="term" value="P:face morphogenesis"/>
    <property type="evidence" value="ECO:0000316"/>
    <property type="project" value="MGI"/>
</dbReference>
<dbReference type="GO" id="GO:0007507">
    <property type="term" value="P:heart development"/>
    <property type="evidence" value="ECO:0007669"/>
    <property type="project" value="Ensembl"/>
</dbReference>
<dbReference type="GO" id="GO:0001957">
    <property type="term" value="P:intramembranous ossification"/>
    <property type="evidence" value="ECO:0000316"/>
    <property type="project" value="MGI"/>
</dbReference>
<dbReference type="GO" id="GO:0001553">
    <property type="term" value="P:luteinization"/>
    <property type="evidence" value="ECO:0007669"/>
    <property type="project" value="Ensembl"/>
</dbReference>
<dbReference type="GO" id="GO:0048246">
    <property type="term" value="P:macrophage chemotaxis"/>
    <property type="evidence" value="ECO:0007669"/>
    <property type="project" value="Ensembl"/>
</dbReference>
<dbReference type="GO" id="GO:0007162">
    <property type="term" value="P:negative regulation of cell adhesion"/>
    <property type="evidence" value="ECO:0007669"/>
    <property type="project" value="Ensembl"/>
</dbReference>
<dbReference type="GO" id="GO:0045906">
    <property type="term" value="P:negative regulation of vasoconstriction"/>
    <property type="evidence" value="ECO:0007669"/>
    <property type="project" value="Ensembl"/>
</dbReference>
<dbReference type="GO" id="GO:0001541">
    <property type="term" value="P:ovarian follicle development"/>
    <property type="evidence" value="ECO:0007669"/>
    <property type="project" value="Ensembl"/>
</dbReference>
<dbReference type="GO" id="GO:0001542">
    <property type="term" value="P:ovulation from ovarian follicle"/>
    <property type="evidence" value="ECO:0007669"/>
    <property type="project" value="Ensembl"/>
</dbReference>
<dbReference type="GO" id="GO:0007567">
    <property type="term" value="P:parturition"/>
    <property type="evidence" value="ECO:0007669"/>
    <property type="project" value="Ensembl"/>
</dbReference>
<dbReference type="GO" id="GO:0014012">
    <property type="term" value="P:peripheral nervous system axon regeneration"/>
    <property type="evidence" value="ECO:0007669"/>
    <property type="project" value="Ensembl"/>
</dbReference>
<dbReference type="GO" id="GO:0030335">
    <property type="term" value="P:positive regulation of cell migration"/>
    <property type="evidence" value="ECO:0007669"/>
    <property type="project" value="Ensembl"/>
</dbReference>
<dbReference type="GO" id="GO:0045089">
    <property type="term" value="P:positive regulation of innate immune response"/>
    <property type="evidence" value="ECO:0000314"/>
    <property type="project" value="MGI"/>
</dbReference>
<dbReference type="GO" id="GO:1903378">
    <property type="term" value="P:positive regulation of oxidative stress-induced neuron intrinsic apoptotic signaling pathway"/>
    <property type="evidence" value="ECO:0007669"/>
    <property type="project" value="Ensembl"/>
</dbReference>
<dbReference type="GO" id="GO:0048661">
    <property type="term" value="P:positive regulation of smooth muscle cell proliferation"/>
    <property type="evidence" value="ECO:0000315"/>
    <property type="project" value="MGI"/>
</dbReference>
<dbReference type="GO" id="GO:1904707">
    <property type="term" value="P:positive regulation of vascular associated smooth muscle cell proliferation"/>
    <property type="evidence" value="ECO:0007669"/>
    <property type="project" value="Ensembl"/>
</dbReference>
<dbReference type="GO" id="GO:0060740">
    <property type="term" value="P:prostate gland epithelium morphogenesis"/>
    <property type="evidence" value="ECO:0007669"/>
    <property type="project" value="Ensembl"/>
</dbReference>
<dbReference type="GO" id="GO:0030163">
    <property type="term" value="P:protein catabolic process"/>
    <property type="evidence" value="ECO:0007669"/>
    <property type="project" value="Ensembl"/>
</dbReference>
<dbReference type="GO" id="GO:0006508">
    <property type="term" value="P:proteolysis"/>
    <property type="evidence" value="ECO:0007669"/>
    <property type="project" value="UniProtKB-KW"/>
</dbReference>
<dbReference type="GO" id="GO:0014823">
    <property type="term" value="P:response to activity"/>
    <property type="evidence" value="ECO:0007669"/>
    <property type="project" value="Ensembl"/>
</dbReference>
<dbReference type="GO" id="GO:1904645">
    <property type="term" value="P:response to amyloid-beta"/>
    <property type="evidence" value="ECO:0000314"/>
    <property type="project" value="ARUK-UCL"/>
</dbReference>
<dbReference type="GO" id="GO:0051602">
    <property type="term" value="P:response to electrical stimulus"/>
    <property type="evidence" value="ECO:0007669"/>
    <property type="project" value="Ensembl"/>
</dbReference>
<dbReference type="GO" id="GO:0043627">
    <property type="term" value="P:response to estrogen"/>
    <property type="evidence" value="ECO:0007669"/>
    <property type="project" value="Ensembl"/>
</dbReference>
<dbReference type="GO" id="GO:0042542">
    <property type="term" value="P:response to hydrogen peroxide"/>
    <property type="evidence" value="ECO:0007669"/>
    <property type="project" value="Ensembl"/>
</dbReference>
<dbReference type="GO" id="GO:0055093">
    <property type="term" value="P:response to hyperoxia"/>
    <property type="evidence" value="ECO:0007669"/>
    <property type="project" value="Ensembl"/>
</dbReference>
<dbReference type="GO" id="GO:0001666">
    <property type="term" value="P:response to hypoxia"/>
    <property type="evidence" value="ECO:0000314"/>
    <property type="project" value="MGI"/>
</dbReference>
<dbReference type="GO" id="GO:0009612">
    <property type="term" value="P:response to mechanical stimulus"/>
    <property type="evidence" value="ECO:0007669"/>
    <property type="project" value="Ensembl"/>
</dbReference>
<dbReference type="GO" id="GO:0035094">
    <property type="term" value="P:response to nicotine"/>
    <property type="evidence" value="ECO:0007669"/>
    <property type="project" value="Ensembl"/>
</dbReference>
<dbReference type="GO" id="GO:0032526">
    <property type="term" value="P:response to retinoic acid"/>
    <property type="evidence" value="ECO:0007669"/>
    <property type="project" value="Ensembl"/>
</dbReference>
<dbReference type="GO" id="GO:0009410">
    <property type="term" value="P:response to xenobiotic stimulus"/>
    <property type="evidence" value="ECO:0007669"/>
    <property type="project" value="Ensembl"/>
</dbReference>
<dbReference type="GO" id="GO:0048705">
    <property type="term" value="P:skeletal system morphogenesis"/>
    <property type="evidence" value="ECO:0000316"/>
    <property type="project" value="MGI"/>
</dbReference>
<dbReference type="GO" id="GO:0048771">
    <property type="term" value="P:tissue remodeling"/>
    <property type="evidence" value="ECO:0007669"/>
    <property type="project" value="Ensembl"/>
</dbReference>
<dbReference type="GO" id="GO:0061450">
    <property type="term" value="P:trophoblast cell migration"/>
    <property type="evidence" value="ECO:0007669"/>
    <property type="project" value="Ensembl"/>
</dbReference>
<dbReference type="CDD" id="cd00062">
    <property type="entry name" value="FN2"/>
    <property type="match status" value="3"/>
</dbReference>
<dbReference type="CDD" id="cd00094">
    <property type="entry name" value="HX"/>
    <property type="match status" value="1"/>
</dbReference>
<dbReference type="CDD" id="cd04278">
    <property type="entry name" value="ZnMc_MMP"/>
    <property type="match status" value="1"/>
</dbReference>
<dbReference type="FunFam" id="2.10.10.10:FF:000002">
    <property type="entry name" value="72 kDa type IV collagenase"/>
    <property type="match status" value="1"/>
</dbReference>
<dbReference type="FunFam" id="2.110.10.10:FF:000004">
    <property type="entry name" value="72 kDa type IV collagenase"/>
    <property type="match status" value="1"/>
</dbReference>
<dbReference type="FunFam" id="3.40.390.10:FF:000010">
    <property type="entry name" value="72 kDa type IV collagenase"/>
    <property type="match status" value="1"/>
</dbReference>
<dbReference type="FunFam" id="2.10.10.10:FF:000001">
    <property type="entry name" value="Fibronectin 1a isoform 1"/>
    <property type="match status" value="2"/>
</dbReference>
<dbReference type="Gene3D" id="3.40.390.10">
    <property type="entry name" value="Collagenase (Catalytic Domain)"/>
    <property type="match status" value="2"/>
</dbReference>
<dbReference type="Gene3D" id="2.10.10.10">
    <property type="entry name" value="Fibronectin, type II, collagen-binding"/>
    <property type="match status" value="2"/>
</dbReference>
<dbReference type="Gene3D" id="2.110.10.10">
    <property type="entry name" value="Hemopexin-like domain"/>
    <property type="match status" value="1"/>
</dbReference>
<dbReference type="InterPro" id="IPR000562">
    <property type="entry name" value="FN_type2_dom"/>
</dbReference>
<dbReference type="InterPro" id="IPR036943">
    <property type="entry name" value="FN_type2_sf"/>
</dbReference>
<dbReference type="InterPro" id="IPR000585">
    <property type="entry name" value="Hemopexin-like_dom"/>
</dbReference>
<dbReference type="InterPro" id="IPR036375">
    <property type="entry name" value="Hemopexin-like_dom_sf"/>
</dbReference>
<dbReference type="InterPro" id="IPR018487">
    <property type="entry name" value="Hemopexin-like_repeat"/>
</dbReference>
<dbReference type="InterPro" id="IPR018486">
    <property type="entry name" value="Hemopexin_CS"/>
</dbReference>
<dbReference type="InterPro" id="IPR013806">
    <property type="entry name" value="Kringle-like"/>
</dbReference>
<dbReference type="InterPro" id="IPR033739">
    <property type="entry name" value="M10A_MMP"/>
</dbReference>
<dbReference type="InterPro" id="IPR024079">
    <property type="entry name" value="MetalloPept_cat_dom_sf"/>
</dbReference>
<dbReference type="InterPro" id="IPR001818">
    <property type="entry name" value="Pept_M10_metallopeptidase"/>
</dbReference>
<dbReference type="InterPro" id="IPR021190">
    <property type="entry name" value="Pept_M10A"/>
</dbReference>
<dbReference type="InterPro" id="IPR021158">
    <property type="entry name" value="Pept_M10A_Zn_BS"/>
</dbReference>
<dbReference type="InterPro" id="IPR006026">
    <property type="entry name" value="Peptidase_Metallo"/>
</dbReference>
<dbReference type="InterPro" id="IPR036365">
    <property type="entry name" value="PGBD-like_sf"/>
</dbReference>
<dbReference type="PANTHER" id="PTHR10201:SF29">
    <property type="entry name" value="72 KDA TYPE IV COLLAGENASE"/>
    <property type="match status" value="1"/>
</dbReference>
<dbReference type="PANTHER" id="PTHR10201">
    <property type="entry name" value="MATRIX METALLOPROTEINASE"/>
    <property type="match status" value="1"/>
</dbReference>
<dbReference type="Pfam" id="PF00040">
    <property type="entry name" value="fn2"/>
    <property type="match status" value="3"/>
</dbReference>
<dbReference type="Pfam" id="PF00045">
    <property type="entry name" value="Hemopexin"/>
    <property type="match status" value="4"/>
</dbReference>
<dbReference type="Pfam" id="PF00413">
    <property type="entry name" value="Peptidase_M10"/>
    <property type="match status" value="2"/>
</dbReference>
<dbReference type="PIRSF" id="PIRSF001191">
    <property type="entry name" value="Peptidase_M10A_matrix"/>
    <property type="match status" value="1"/>
</dbReference>
<dbReference type="PRINTS" id="PR00013">
    <property type="entry name" value="FNTYPEII"/>
</dbReference>
<dbReference type="PRINTS" id="PR00138">
    <property type="entry name" value="MATRIXIN"/>
</dbReference>
<dbReference type="SMART" id="SM00059">
    <property type="entry name" value="FN2"/>
    <property type="match status" value="3"/>
</dbReference>
<dbReference type="SMART" id="SM00120">
    <property type="entry name" value="HX"/>
    <property type="match status" value="4"/>
</dbReference>
<dbReference type="SMART" id="SM00235">
    <property type="entry name" value="ZnMc"/>
    <property type="match status" value="1"/>
</dbReference>
<dbReference type="SUPFAM" id="SSF50923">
    <property type="entry name" value="Hemopexin-like domain"/>
    <property type="match status" value="1"/>
</dbReference>
<dbReference type="SUPFAM" id="SSF57440">
    <property type="entry name" value="Kringle-like"/>
    <property type="match status" value="3"/>
</dbReference>
<dbReference type="SUPFAM" id="SSF55486">
    <property type="entry name" value="Metalloproteases ('zincins'), catalytic domain"/>
    <property type="match status" value="1"/>
</dbReference>
<dbReference type="SUPFAM" id="SSF47090">
    <property type="entry name" value="PGBD-like"/>
    <property type="match status" value="1"/>
</dbReference>
<dbReference type="PROSITE" id="PS00546">
    <property type="entry name" value="CYSTEINE_SWITCH"/>
    <property type="match status" value="1"/>
</dbReference>
<dbReference type="PROSITE" id="PS00023">
    <property type="entry name" value="FN2_1"/>
    <property type="match status" value="3"/>
</dbReference>
<dbReference type="PROSITE" id="PS51092">
    <property type="entry name" value="FN2_2"/>
    <property type="match status" value="3"/>
</dbReference>
<dbReference type="PROSITE" id="PS00024">
    <property type="entry name" value="HEMOPEXIN"/>
    <property type="match status" value="1"/>
</dbReference>
<dbReference type="PROSITE" id="PS51642">
    <property type="entry name" value="HEMOPEXIN_2"/>
    <property type="match status" value="4"/>
</dbReference>
<dbReference type="PROSITE" id="PS00142">
    <property type="entry name" value="ZINC_PROTEASE"/>
    <property type="match status" value="1"/>
</dbReference>
<organism>
    <name type="scientific">Mus musculus</name>
    <name type="common">Mouse</name>
    <dbReference type="NCBI Taxonomy" id="10090"/>
    <lineage>
        <taxon>Eukaryota</taxon>
        <taxon>Metazoa</taxon>
        <taxon>Chordata</taxon>
        <taxon>Craniata</taxon>
        <taxon>Vertebrata</taxon>
        <taxon>Euteleostomi</taxon>
        <taxon>Mammalia</taxon>
        <taxon>Eutheria</taxon>
        <taxon>Euarchontoglires</taxon>
        <taxon>Glires</taxon>
        <taxon>Rodentia</taxon>
        <taxon>Myomorpha</taxon>
        <taxon>Muroidea</taxon>
        <taxon>Muridae</taxon>
        <taxon>Murinae</taxon>
        <taxon>Mus</taxon>
        <taxon>Mus</taxon>
    </lineage>
</organism>
<evidence type="ECO:0000250" key="1"/>
<evidence type="ECO:0000250" key="2">
    <source>
        <dbReference type="UniProtKB" id="P08253"/>
    </source>
</evidence>
<evidence type="ECO:0000250" key="3">
    <source>
        <dbReference type="UniProtKB" id="P33436"/>
    </source>
</evidence>
<evidence type="ECO:0000255" key="4"/>
<evidence type="ECO:0000255" key="5">
    <source>
        <dbReference type="PROSITE-ProRule" id="PRU00479"/>
    </source>
</evidence>
<evidence type="ECO:0000255" key="6">
    <source>
        <dbReference type="PROSITE-ProRule" id="PRU10095"/>
    </source>
</evidence>
<evidence type="ECO:0000256" key="7">
    <source>
        <dbReference type="SAM" id="MobiDB-lite"/>
    </source>
</evidence>
<evidence type="ECO:0000269" key="8">
    <source>
    </source>
</evidence>
<evidence type="ECO:0000269" key="9">
    <source>
    </source>
</evidence>
<evidence type="ECO:0000305" key="10"/>
<reference key="1">
    <citation type="journal article" date="1992" name="J. Biol. Chem.">
        <title>Molecular cloning of murine 72-kDa type IV collagenase and its expression during mouse development.</title>
        <authorList>
            <person name="Reponen P."/>
            <person name="Sahlberg C."/>
            <person name="Huhtala P."/>
            <person name="Hurskainen T."/>
            <person name="Thesleff I."/>
            <person name="Tryggvason K."/>
        </authorList>
    </citation>
    <scope>NUCLEOTIDE SEQUENCE [MRNA] (ISOFORM 1)</scope>
</reference>
<reference key="2">
    <citation type="journal article" date="2004" name="Genome Res.">
        <title>The status, quality, and expansion of the NIH full-length cDNA project: the Mammalian Gene Collection (MGC).</title>
        <authorList>
            <consortium name="The MGC Project Team"/>
        </authorList>
    </citation>
    <scope>NUCLEOTIDE SEQUENCE [LARGE SCALE MRNA] (ISOFORM 1)</scope>
    <source>
        <strain>C57BL/6J</strain>
        <tissue>Brain</tissue>
    </source>
</reference>
<reference key="3">
    <citation type="journal article" date="1989" name="Genes Dev.">
        <title>Genes for extracellular-matrix-degrading metalloproteinases and their inhibitor, TIMP, are expressed during early mammalian development.</title>
        <authorList>
            <person name="Brenner C.A."/>
            <person name="Adler R.R."/>
            <person name="Rappolee D.A."/>
            <person name="Pedersen R.A."/>
            <person name="Werb Z."/>
        </authorList>
    </citation>
    <scope>DEVELOPMENTAL STAGE</scope>
    <source>
        <tissue>Embryo</tissue>
    </source>
</reference>
<reference key="4">
    <citation type="journal article" date="2010" name="Cell">
        <title>A tissue-specific atlas of mouse protein phosphorylation and expression.</title>
        <authorList>
            <person name="Huttlin E.L."/>
            <person name="Jedrychowski M.P."/>
            <person name="Elias J.E."/>
            <person name="Goswami T."/>
            <person name="Rad R."/>
            <person name="Beausoleil S.A."/>
            <person name="Villen J."/>
            <person name="Haas W."/>
            <person name="Sowa M.E."/>
            <person name="Gygi S.P."/>
        </authorList>
    </citation>
    <scope>IDENTIFICATION BY MASS SPECTROMETRY [LARGE SCALE ANALYSIS]</scope>
    <source>
        <tissue>Lung</tissue>
    </source>
</reference>
<reference key="5">
    <citation type="journal article" date="2012" name="PLoS ONE">
        <title>A novel intracellular isoform of matrix metalloproteinase-2 induced by oxidative stress activates innate immunity.</title>
        <authorList>
            <person name="Lovett D.H."/>
            <person name="Mahimkar R."/>
            <person name="Raffai R.L."/>
            <person name="Cape L."/>
            <person name="Maklashina E."/>
            <person name="Cecchini G."/>
            <person name="Karliner J.S."/>
        </authorList>
    </citation>
    <scope>ALTERNATIVE SPLICING (ISOFORM 2)</scope>
    <scope>FUNCTION</scope>
    <scope>SUBCELLULAR LOCATION</scope>
</reference>